<accession>P11925</accession>
<name>ELHC_APLCA</name>
<evidence type="ECO:0000269" key="1">
    <source>
    </source>
</evidence>
<evidence type="ECO:0000305" key="2"/>
<protein>
    <recommendedName>
        <fullName>Califin-C</fullName>
    </recommendedName>
    <component>
        <recommendedName>
            <fullName>Califin-C large subunit</fullName>
        </recommendedName>
    </component>
    <component>
        <recommendedName>
            <fullName>Califin-C small subunit</fullName>
        </recommendedName>
    </component>
</protein>
<reference key="1">
    <citation type="journal article" date="1986" name="J. Biol. Chem.">
        <title>Isolation and primary structure of the califins, three biologically active egg-laying hormone-like peptides from the atrial gland of Aplysia californica.</title>
        <authorList>
            <person name="Rothman B.S."/>
            <person name="Hawke D.H."/>
            <person name="Brown R.O."/>
            <person name="Lee T.D."/>
            <person name="Dehghan A.A."/>
            <person name="Shively J.E."/>
            <person name="Mayeri E."/>
        </authorList>
    </citation>
    <scope>PROTEIN SEQUENCE OF 1-36 AND 37-54</scope>
    <scope>IDENTIFICATION BY MASS SPECTROMETRY</scope>
    <scope>AMIDATION AT LEU-36</scope>
    <source>
        <tissue>Atrial gland</tissue>
    </source>
</reference>
<reference key="2">
    <citation type="journal article" date="1986" name="J. Biol. Chem.">
        <title>Evidence for the expression of three genes encoding homologous atrial gland peptides that cause egg laying in Aplysia.</title>
        <authorList>
            <person name="Nagle G.T."/>
            <person name="Painter S.D."/>
            <person name="Blankenship J.E."/>
            <person name="Dixon J.D."/>
            <person name="Kurosky A."/>
        </authorList>
    </citation>
    <scope>PROTEIN SEQUENCE</scope>
    <source>
        <tissue>Atrial gland</tissue>
    </source>
</reference>
<comment type="function">
    <text>Injected in sexually mature animals califin C excites LB and LC cells of the abdominal ganglion and cause egg-laying.</text>
</comment>
<comment type="subunit">
    <text>This protein consists of a large 36-residue subunit, bound by a single disulfide-bond to a small 18-residue subunit.</text>
</comment>
<comment type="subcellular location">
    <subcellularLocation>
        <location>Secreted</location>
    </subcellularLocation>
</comment>
<comment type="similarity">
    <text evidence="2">Belongs to the molluscan ELH family.</text>
</comment>
<proteinExistence type="evidence at protein level"/>
<keyword id="KW-0027">Amidation</keyword>
<keyword id="KW-0903">Direct protein sequencing</keyword>
<keyword id="KW-1015">Disulfide bond</keyword>
<keyword id="KW-0372">Hormone</keyword>
<keyword id="KW-0527">Neuropeptide</keyword>
<keyword id="KW-0964">Secreted</keyword>
<dbReference type="SMR" id="P11925"/>
<dbReference type="Proteomes" id="UP000694888">
    <property type="component" value="Unplaced"/>
</dbReference>
<dbReference type="GO" id="GO:0005576">
    <property type="term" value="C:extracellular region"/>
    <property type="evidence" value="ECO:0007669"/>
    <property type="project" value="UniProtKB-SubCell"/>
</dbReference>
<dbReference type="GO" id="GO:0005179">
    <property type="term" value="F:hormone activity"/>
    <property type="evidence" value="ECO:0007669"/>
    <property type="project" value="UniProtKB-KW"/>
</dbReference>
<dbReference type="GO" id="GO:0007218">
    <property type="term" value="P:neuropeptide signaling pathway"/>
    <property type="evidence" value="ECO:0007669"/>
    <property type="project" value="UniProtKB-KW"/>
</dbReference>
<dbReference type="InterPro" id="IPR003424">
    <property type="entry name" value="ELH"/>
</dbReference>
<dbReference type="Pfam" id="PF02323">
    <property type="entry name" value="ELH"/>
    <property type="match status" value="1"/>
</dbReference>
<feature type="peptide" id="PRO_0000001808" description="Califin-C large subunit" evidence="1">
    <location>
        <begin position="1"/>
        <end position="36"/>
    </location>
</feature>
<feature type="peptide" id="PRO_0000001809" description="Califin-C small subunit">
    <location>
        <begin position="37"/>
        <end position="54"/>
    </location>
</feature>
<feature type="modified residue" description="Leucine amide" evidence="1">
    <location>
        <position position="36"/>
    </location>
</feature>
<feature type="disulfide bond" description="Interchain (between large and small subunits)">
    <location>
        <begin position="25"/>
        <end position="53"/>
    </location>
</feature>
<feature type="non-consecutive residues" evidence="2">
    <location>
        <begin position="36"/>
        <end position="37"/>
    </location>
</feature>
<organism>
    <name type="scientific">Aplysia californica</name>
    <name type="common">California sea hare</name>
    <dbReference type="NCBI Taxonomy" id="6500"/>
    <lineage>
        <taxon>Eukaryota</taxon>
        <taxon>Metazoa</taxon>
        <taxon>Spiralia</taxon>
        <taxon>Lophotrochozoa</taxon>
        <taxon>Mollusca</taxon>
        <taxon>Gastropoda</taxon>
        <taxon>Heterobranchia</taxon>
        <taxon>Euthyneura</taxon>
        <taxon>Tectipleura</taxon>
        <taxon>Aplysiida</taxon>
        <taxon>Aplysioidea</taxon>
        <taxon>Aplysiidae</taxon>
        <taxon>Aplysia</taxon>
    </lineage>
</organism>
<sequence>ISINQDLKAITDMLLTEQIQARRRCLAALRQRLLDLDSDVSLFNGDLLPNGRCS</sequence>